<reference key="1">
    <citation type="submission" date="2009-02" db="EMBL/GenBank/DDBJ databases">
        <title>Genome sequence of Bacillus cereus 03BB102.</title>
        <authorList>
            <person name="Dodson R.J."/>
            <person name="Jackson P."/>
            <person name="Munk A.C."/>
            <person name="Brettin T."/>
            <person name="Bruce D."/>
            <person name="Detter C."/>
            <person name="Tapia R."/>
            <person name="Han C."/>
            <person name="Sutton G."/>
            <person name="Sims D."/>
        </authorList>
    </citation>
    <scope>NUCLEOTIDE SEQUENCE [LARGE SCALE GENOMIC DNA]</scope>
    <source>
        <strain>03BB102</strain>
    </source>
</reference>
<organism>
    <name type="scientific">Bacillus cereus (strain 03BB102)</name>
    <dbReference type="NCBI Taxonomy" id="572264"/>
    <lineage>
        <taxon>Bacteria</taxon>
        <taxon>Bacillati</taxon>
        <taxon>Bacillota</taxon>
        <taxon>Bacilli</taxon>
        <taxon>Bacillales</taxon>
        <taxon>Bacillaceae</taxon>
        <taxon>Bacillus</taxon>
        <taxon>Bacillus cereus group</taxon>
    </lineage>
</organism>
<feature type="chain" id="PRO_1000191879" description="Argininosuccinate synthase">
    <location>
        <begin position="1"/>
        <end position="401"/>
    </location>
</feature>
<feature type="binding site" evidence="1">
    <location>
        <begin position="9"/>
        <end position="17"/>
    </location>
    <ligand>
        <name>ATP</name>
        <dbReference type="ChEBI" id="CHEBI:30616"/>
    </ligand>
</feature>
<feature type="binding site" evidence="1">
    <location>
        <position position="86"/>
    </location>
    <ligand>
        <name>L-citrulline</name>
        <dbReference type="ChEBI" id="CHEBI:57743"/>
    </ligand>
</feature>
<feature type="binding site" evidence="1">
    <location>
        <position position="116"/>
    </location>
    <ligand>
        <name>ATP</name>
        <dbReference type="ChEBI" id="CHEBI:30616"/>
    </ligand>
</feature>
<feature type="binding site" evidence="1">
    <location>
        <position position="118"/>
    </location>
    <ligand>
        <name>L-aspartate</name>
        <dbReference type="ChEBI" id="CHEBI:29991"/>
    </ligand>
</feature>
<feature type="binding site" evidence="1">
    <location>
        <position position="122"/>
    </location>
    <ligand>
        <name>L-aspartate</name>
        <dbReference type="ChEBI" id="CHEBI:29991"/>
    </ligand>
</feature>
<feature type="binding site" evidence="1">
    <location>
        <position position="122"/>
    </location>
    <ligand>
        <name>L-citrulline</name>
        <dbReference type="ChEBI" id="CHEBI:57743"/>
    </ligand>
</feature>
<feature type="binding site" evidence="1">
    <location>
        <position position="123"/>
    </location>
    <ligand>
        <name>L-aspartate</name>
        <dbReference type="ChEBI" id="CHEBI:29991"/>
    </ligand>
</feature>
<feature type="binding site" evidence="1">
    <location>
        <position position="126"/>
    </location>
    <ligand>
        <name>L-citrulline</name>
        <dbReference type="ChEBI" id="CHEBI:57743"/>
    </ligand>
</feature>
<feature type="binding site" evidence="1">
    <location>
        <position position="174"/>
    </location>
    <ligand>
        <name>L-citrulline</name>
        <dbReference type="ChEBI" id="CHEBI:57743"/>
    </ligand>
</feature>
<feature type="binding site" evidence="1">
    <location>
        <position position="183"/>
    </location>
    <ligand>
        <name>L-citrulline</name>
        <dbReference type="ChEBI" id="CHEBI:57743"/>
    </ligand>
</feature>
<feature type="binding site" evidence="1">
    <location>
        <position position="259"/>
    </location>
    <ligand>
        <name>L-citrulline</name>
        <dbReference type="ChEBI" id="CHEBI:57743"/>
    </ligand>
</feature>
<feature type="binding site" evidence="1">
    <location>
        <position position="271"/>
    </location>
    <ligand>
        <name>L-citrulline</name>
        <dbReference type="ChEBI" id="CHEBI:57743"/>
    </ligand>
</feature>
<accession>C1EUX9</accession>
<name>ASSY_BACC3</name>
<keyword id="KW-0028">Amino-acid biosynthesis</keyword>
<keyword id="KW-0055">Arginine biosynthesis</keyword>
<keyword id="KW-0067">ATP-binding</keyword>
<keyword id="KW-0963">Cytoplasm</keyword>
<keyword id="KW-0436">Ligase</keyword>
<keyword id="KW-0547">Nucleotide-binding</keyword>
<proteinExistence type="inferred from homology"/>
<dbReference type="EC" id="6.3.4.5" evidence="1"/>
<dbReference type="EMBL" id="CP001407">
    <property type="protein sequence ID" value="ACO29546.1"/>
    <property type="molecule type" value="Genomic_DNA"/>
</dbReference>
<dbReference type="RefSeq" id="WP_000412329.1">
    <property type="nucleotide sequence ID" value="NZ_CP009318.1"/>
</dbReference>
<dbReference type="SMR" id="C1EUX9"/>
<dbReference type="KEGG" id="bcx:BCA_4746"/>
<dbReference type="PATRIC" id="fig|572264.18.peg.4694"/>
<dbReference type="UniPathway" id="UPA00068">
    <property type="reaction ID" value="UER00113"/>
</dbReference>
<dbReference type="Proteomes" id="UP000002210">
    <property type="component" value="Chromosome"/>
</dbReference>
<dbReference type="GO" id="GO:0005737">
    <property type="term" value="C:cytoplasm"/>
    <property type="evidence" value="ECO:0007669"/>
    <property type="project" value="UniProtKB-SubCell"/>
</dbReference>
<dbReference type="GO" id="GO:0004055">
    <property type="term" value="F:argininosuccinate synthase activity"/>
    <property type="evidence" value="ECO:0007669"/>
    <property type="project" value="UniProtKB-UniRule"/>
</dbReference>
<dbReference type="GO" id="GO:0005524">
    <property type="term" value="F:ATP binding"/>
    <property type="evidence" value="ECO:0007669"/>
    <property type="project" value="UniProtKB-UniRule"/>
</dbReference>
<dbReference type="GO" id="GO:0000053">
    <property type="term" value="P:argininosuccinate metabolic process"/>
    <property type="evidence" value="ECO:0007669"/>
    <property type="project" value="TreeGrafter"/>
</dbReference>
<dbReference type="GO" id="GO:0006526">
    <property type="term" value="P:L-arginine biosynthetic process"/>
    <property type="evidence" value="ECO:0007669"/>
    <property type="project" value="UniProtKB-UniRule"/>
</dbReference>
<dbReference type="GO" id="GO:0000050">
    <property type="term" value="P:urea cycle"/>
    <property type="evidence" value="ECO:0007669"/>
    <property type="project" value="TreeGrafter"/>
</dbReference>
<dbReference type="CDD" id="cd01999">
    <property type="entry name" value="ASS"/>
    <property type="match status" value="1"/>
</dbReference>
<dbReference type="FunFam" id="1.20.5.470:FF:000002">
    <property type="entry name" value="Argininosuccinate synthase"/>
    <property type="match status" value="1"/>
</dbReference>
<dbReference type="FunFam" id="3.40.50.620:FF:000038">
    <property type="entry name" value="Argininosuccinate synthase"/>
    <property type="match status" value="1"/>
</dbReference>
<dbReference type="FunFam" id="3.90.1260.10:FF:000007">
    <property type="entry name" value="Argininosuccinate synthase"/>
    <property type="match status" value="1"/>
</dbReference>
<dbReference type="Gene3D" id="3.90.1260.10">
    <property type="entry name" value="Argininosuccinate synthetase, chain A, domain 2"/>
    <property type="match status" value="1"/>
</dbReference>
<dbReference type="Gene3D" id="3.40.50.620">
    <property type="entry name" value="HUPs"/>
    <property type="match status" value="1"/>
</dbReference>
<dbReference type="Gene3D" id="1.20.5.470">
    <property type="entry name" value="Single helix bin"/>
    <property type="match status" value="1"/>
</dbReference>
<dbReference type="HAMAP" id="MF_00005">
    <property type="entry name" value="Arg_succ_synth_type1"/>
    <property type="match status" value="1"/>
</dbReference>
<dbReference type="InterPro" id="IPR048268">
    <property type="entry name" value="Arginosuc_syn_C"/>
</dbReference>
<dbReference type="InterPro" id="IPR048267">
    <property type="entry name" value="Arginosuc_syn_N"/>
</dbReference>
<dbReference type="InterPro" id="IPR001518">
    <property type="entry name" value="Arginosuc_synth"/>
</dbReference>
<dbReference type="InterPro" id="IPR018223">
    <property type="entry name" value="Arginosuc_synth_CS"/>
</dbReference>
<dbReference type="InterPro" id="IPR023434">
    <property type="entry name" value="Arginosuc_synth_type_1_subfam"/>
</dbReference>
<dbReference type="InterPro" id="IPR024074">
    <property type="entry name" value="AS_cat/multimer_dom_body"/>
</dbReference>
<dbReference type="InterPro" id="IPR014729">
    <property type="entry name" value="Rossmann-like_a/b/a_fold"/>
</dbReference>
<dbReference type="NCBIfam" id="TIGR00032">
    <property type="entry name" value="argG"/>
    <property type="match status" value="1"/>
</dbReference>
<dbReference type="NCBIfam" id="NF001770">
    <property type="entry name" value="PRK00509.1"/>
    <property type="match status" value="1"/>
</dbReference>
<dbReference type="PANTHER" id="PTHR11587">
    <property type="entry name" value="ARGININOSUCCINATE SYNTHASE"/>
    <property type="match status" value="1"/>
</dbReference>
<dbReference type="PANTHER" id="PTHR11587:SF2">
    <property type="entry name" value="ARGININOSUCCINATE SYNTHASE"/>
    <property type="match status" value="1"/>
</dbReference>
<dbReference type="Pfam" id="PF20979">
    <property type="entry name" value="Arginosuc_syn_C"/>
    <property type="match status" value="1"/>
</dbReference>
<dbReference type="Pfam" id="PF00764">
    <property type="entry name" value="Arginosuc_synth"/>
    <property type="match status" value="1"/>
</dbReference>
<dbReference type="SUPFAM" id="SSF52402">
    <property type="entry name" value="Adenine nucleotide alpha hydrolases-like"/>
    <property type="match status" value="1"/>
</dbReference>
<dbReference type="SUPFAM" id="SSF69864">
    <property type="entry name" value="Argininosuccinate synthetase, C-terminal domain"/>
    <property type="match status" value="1"/>
</dbReference>
<dbReference type="PROSITE" id="PS00564">
    <property type="entry name" value="ARGININOSUCCIN_SYN_1"/>
    <property type="match status" value="1"/>
</dbReference>
<dbReference type="PROSITE" id="PS00565">
    <property type="entry name" value="ARGININOSUCCIN_SYN_2"/>
    <property type="match status" value="1"/>
</dbReference>
<protein>
    <recommendedName>
        <fullName evidence="1">Argininosuccinate synthase</fullName>
        <ecNumber evidence="1">6.3.4.5</ecNumber>
    </recommendedName>
    <alternativeName>
        <fullName evidence="1">Citrulline--aspartate ligase</fullName>
    </alternativeName>
</protein>
<sequence length="401" mass="44670">MEKKKVVLAYSGGLDTSVAIKWLQEKNYDIIALCLDLGEGKDLAFVKEKALSVGAIKSYMIDVQEEFANEYALMAMQAHTLYEGKYPLVSALSRPLIAKKLVEIAEQEGATAVAHGCTGKGNDQVRFEVSIQALNPYLEVIAPVREWKWSREEEIAYAKENNVPIPINLDSPFSIDQNLWGRSNECGILEDPWAAPPEDAYEMTLALEDTPNKPEFVEIGFEAGVPTTLNGTAYPLSELIKTLNALAGKHGVGRIDHVENRLVGIKSREVYECPAAMTLITAHKELEDLTLVKEVAHFKPMIEQKITELIYNGLWFSPLKQALNAFLQETQKNVTGTVRVKLFKGHAIVEGRKSEYSLYDEKLATYTAQDEFNHDAAVGFISLFGLPTKVYSQVNQKKVEA</sequence>
<gene>
    <name evidence="1" type="primary">argG</name>
    <name type="ordered locus">BCA_4746</name>
</gene>
<evidence type="ECO:0000255" key="1">
    <source>
        <dbReference type="HAMAP-Rule" id="MF_00005"/>
    </source>
</evidence>
<comment type="catalytic activity">
    <reaction evidence="1">
        <text>L-citrulline + L-aspartate + ATP = 2-(N(omega)-L-arginino)succinate + AMP + diphosphate + H(+)</text>
        <dbReference type="Rhea" id="RHEA:10932"/>
        <dbReference type="ChEBI" id="CHEBI:15378"/>
        <dbReference type="ChEBI" id="CHEBI:29991"/>
        <dbReference type="ChEBI" id="CHEBI:30616"/>
        <dbReference type="ChEBI" id="CHEBI:33019"/>
        <dbReference type="ChEBI" id="CHEBI:57472"/>
        <dbReference type="ChEBI" id="CHEBI:57743"/>
        <dbReference type="ChEBI" id="CHEBI:456215"/>
        <dbReference type="EC" id="6.3.4.5"/>
    </reaction>
</comment>
<comment type="pathway">
    <text evidence="1">Amino-acid biosynthesis; L-arginine biosynthesis; L-arginine from L-ornithine and carbamoyl phosphate: step 2/3.</text>
</comment>
<comment type="subunit">
    <text evidence="1">Homotetramer.</text>
</comment>
<comment type="subcellular location">
    <subcellularLocation>
        <location evidence="1">Cytoplasm</location>
    </subcellularLocation>
</comment>
<comment type="similarity">
    <text evidence="1">Belongs to the argininosuccinate synthase family. Type 1 subfamily.</text>
</comment>